<proteinExistence type="evidence at transcript level"/>
<comment type="function">
    <text evidence="6">Aerial growth, conidiation, and dispersal of filamentous fungi in the environment rely upon a capability of their secreting small amphipathic proteins called hydrophobins (HPBs) with low sequence identity. Class I can self-assemble into an outermost layer of rodlet bundles on aerial cell surfaces, conferring cellular hydrophobicity that supports fungal growth, development and dispersal; whereas Class II form highly ordered films at water-air interfaces through intermolecular interactions but contribute nothing to the rodlet structure.</text>
</comment>
<comment type="subunit">
    <text evidence="1">Self-assembles to form functional amyloid fibrils called rodlets. Self-assembly into fibrillar rodlets occurs spontaneously at hydrophobic:hydrophilic interfaces and the rodlets further associate laterally to form amphipathic monolayers.</text>
</comment>
<comment type="subcellular location">
    <subcellularLocation>
        <location evidence="1">Secreted</location>
    </subcellularLocation>
    <subcellularLocation>
        <location evidence="1">Secreted</location>
        <location evidence="1">Cell wall</location>
    </subcellularLocation>
</comment>
<comment type="developmental stage">
    <text evidence="4">Shows relatively higher levels of expression in the primordial stages and relatively low levels in the mycelial stage.</text>
</comment>
<comment type="induction">
    <text evidence="4">A CT-rich motif, which is often found immediately upstream of the transcription start point of highly expressed filamentous fungal genes, is present at the expected position (Ref.1). One additional CT-rich region is also found upstream of the TATA box in the promoter region (Ref.1).</text>
</comment>
<comment type="similarity">
    <text evidence="6">Belongs to the fungal hydrophobin family.</text>
</comment>
<name>HYD6_FLAVE</name>
<protein>
    <recommendedName>
        <fullName evidence="5">Class I hydrophobin 6</fullName>
    </recommendedName>
</protein>
<sequence length="112" mass="11082">MFSAAISVFVLATLTAATPMARGIVPAPPAGQCNVGTQQCCNTVQDASSDPAAGILALLGINVQDVTGQVGLTCNPITVIGGVNSNCDASPVCCENNSFGSLISLGCVPVSL</sequence>
<keyword id="KW-0134">Cell wall</keyword>
<keyword id="KW-1015">Disulfide bond</keyword>
<keyword id="KW-0325">Glycoprotein</keyword>
<keyword id="KW-0964">Secreted</keyword>
<keyword id="KW-0732">Signal</keyword>
<dbReference type="EMBL" id="KT868838">
    <property type="protein sequence ID" value="AOV80986.1"/>
    <property type="molecule type" value="Genomic_DNA"/>
</dbReference>
<dbReference type="SMR" id="A0A1I9QLC7"/>
<dbReference type="GO" id="GO:0005576">
    <property type="term" value="C:extracellular region"/>
    <property type="evidence" value="ECO:0007669"/>
    <property type="project" value="UniProtKB-KW"/>
</dbReference>
<dbReference type="GO" id="GO:0009277">
    <property type="term" value="C:fungal-type cell wall"/>
    <property type="evidence" value="ECO:0007669"/>
    <property type="project" value="InterPro"/>
</dbReference>
<dbReference type="GO" id="GO:0005199">
    <property type="term" value="F:structural constituent of cell wall"/>
    <property type="evidence" value="ECO:0007669"/>
    <property type="project" value="InterPro"/>
</dbReference>
<dbReference type="CDD" id="cd23507">
    <property type="entry name" value="hydrophobin_I"/>
    <property type="match status" value="1"/>
</dbReference>
<dbReference type="InterPro" id="IPR001338">
    <property type="entry name" value="Hydrophobin"/>
</dbReference>
<dbReference type="Pfam" id="PF01185">
    <property type="entry name" value="Hydrophobin"/>
    <property type="match status" value="1"/>
</dbReference>
<dbReference type="SMART" id="SM00075">
    <property type="entry name" value="HYDRO"/>
    <property type="match status" value="1"/>
</dbReference>
<feature type="signal peptide" evidence="2">
    <location>
        <begin position="1"/>
        <end position="17"/>
    </location>
</feature>
<feature type="chain" id="PRO_5013988045" description="Class I hydrophobin 6">
    <location>
        <begin position="18"/>
        <end position="112"/>
    </location>
</feature>
<feature type="glycosylation site" description="N-linked (GlcNAc...) asparagine" evidence="3">
    <location>
        <position position="96"/>
    </location>
</feature>
<feature type="disulfide bond" evidence="1">
    <location>
        <begin position="33"/>
        <end position="93"/>
    </location>
</feature>
<feature type="disulfide bond" evidence="1">
    <location>
        <begin position="40"/>
        <end position="87"/>
    </location>
</feature>
<feature type="disulfide bond" evidence="1">
    <location>
        <begin position="41"/>
        <end position="74"/>
    </location>
</feature>
<feature type="disulfide bond" evidence="1">
    <location>
        <begin position="94"/>
        <end position="107"/>
    </location>
</feature>
<evidence type="ECO:0000250" key="1">
    <source>
        <dbReference type="UniProtKB" id="Q04571"/>
    </source>
</evidence>
<evidence type="ECO:0000255" key="2"/>
<evidence type="ECO:0000255" key="3">
    <source>
        <dbReference type="PROSITE-ProRule" id="PRU00498"/>
    </source>
</evidence>
<evidence type="ECO:0000269" key="4">
    <source ref="1"/>
</evidence>
<evidence type="ECO:0000303" key="5">
    <source ref="1"/>
</evidence>
<evidence type="ECO:0000305" key="6"/>
<accession>A0A1I9QLC7</accession>
<reference key="1">
    <citation type="journal article" date="2016" name="Mycoscience">
        <title>Further characterization of hydrophobin genes in genome of Flammulina velutipes.</title>
        <authorList>
            <person name="Kim H.-I."/>
            <person name="Lee C.-S."/>
            <person name="Park Y.-J."/>
        </authorList>
    </citation>
    <scope>NUCLEOTIDE SEQUENCE [GENOMIC DNA]</scope>
    <scope>DEVELOPMENTAL STAGE</scope>
    <scope>INDUCTION</scope>
</reference>
<reference key="2">
    <citation type="journal article" date="2020" name="Front. Microbiol.">
        <title>A WD40 Protein Encoding Gene Fvcpc2 Positively Regulates Mushroom Development and Yield in Flammulina velutipes.</title>
        <authorList>
            <person name="Wu T."/>
            <person name="Zhang Z."/>
            <person name="Hu C."/>
            <person name="Zhang L."/>
            <person name="Wei S."/>
            <person name="Li S."/>
        </authorList>
    </citation>
    <scope>INDUCTION</scope>
</reference>
<organism>
    <name type="scientific">Flammulina velutipes</name>
    <name type="common">Agaricus velutipes</name>
    <dbReference type="NCBI Taxonomy" id="38945"/>
    <lineage>
        <taxon>Eukaryota</taxon>
        <taxon>Fungi</taxon>
        <taxon>Dikarya</taxon>
        <taxon>Basidiomycota</taxon>
        <taxon>Agaricomycotina</taxon>
        <taxon>Agaricomycetes</taxon>
        <taxon>Agaricomycetidae</taxon>
        <taxon>Agaricales</taxon>
        <taxon>Marasmiineae</taxon>
        <taxon>Physalacriaceae</taxon>
        <taxon>Flammulina</taxon>
    </lineage>
</organism>
<gene>
    <name evidence="5" type="primary">Hyd-6</name>
</gene>